<keyword id="KW-0963">Cytoplasm</keyword>
<keyword id="KW-0396">Initiation factor</keyword>
<keyword id="KW-0648">Protein biosynthesis</keyword>
<keyword id="KW-1185">Reference proteome</keyword>
<feature type="chain" id="PRO_0000366885" description="Eukaryotic translation initiation factor 3 subunit C">
    <location>
        <begin position="1"/>
        <end position="870"/>
    </location>
</feature>
<feature type="domain" description="PCI" evidence="2">
    <location>
        <begin position="608"/>
        <end position="782"/>
    </location>
</feature>
<feature type="region of interest" description="Disordered" evidence="3">
    <location>
        <begin position="1"/>
        <end position="92"/>
    </location>
</feature>
<feature type="region of interest" description="Disordered" evidence="3">
    <location>
        <begin position="807"/>
        <end position="870"/>
    </location>
</feature>
<feature type="compositionally biased region" description="Acidic residues" evidence="3">
    <location>
        <begin position="14"/>
        <end position="54"/>
    </location>
</feature>
<feature type="compositionally biased region" description="Gly residues" evidence="3">
    <location>
        <begin position="824"/>
        <end position="844"/>
    </location>
</feature>
<sequence>MSRFFRGDSSSESSSDEEEDLYSDDEEVQEQPEEESEEDDSEEDDDDDDSDSSSDDGVGKKTGANAFLKDDSDSDSESSGDEGVKVVKSAKNKRFEELEATAKAIENGEKINDWGSISAEFDKLNRQVAKLLQSGTTPKVYIKALAELEDFMNETLAKQKVTPKKMNATNSRGLNAVKQKLKKTSKEHQKDIDSFRADKDAYMESEDEEVVAPKPKKAKSSAAAQNLVIDGDDDEGWGTVGKGGRTLQFTPESILKHLRTILESRGKKNTDRNEQIKIMEKLYEVAATPYQRIRVLLTLISTRFDMTTGTQTFMSQEQWKAAEKEFATLLSVVETNREFVVVETAEPWEDDEKLPTVADGEKFKIPGSIVSFVERLDDELTRSLQHIDPHTAEYIERLSDESDLYNNIVRTMLYQEEISKDESLTEPQRSLNRVVMRRLEHVYFKPSAVIKILDENCWKAIPAELDSTITPRGSVQDAKTLVNILCNYLYINTEGEGLTKARAMLCQIYFEALHDNYYKARDMMLMSHLQETINSFDVHSQILFNRTLVQVGLCAFRAGLVYEAQTTLQEICGSGRQKELLAQGVMIQRYNQVTPDQERLEKQRQLPFHMHINLELLECVYLTCSMLLEIPLFAQTGSSPDIKKRIISKTYRRMLEYHERQIFTGPPENTRDHVMQASKALAQGEWKKATDYIHSIKIWELMSKPEEIKAMLSAQIQEEGLRTYLFTYAPYYDTLSVNRLSSMFELPDRKVAAIVSKMISHEELAAALDQVNSSIIFRKGVELSRLQSLALSLSDKASGLIESNERTLETRTQGTANAFERQGGRGGRGGNRGGRGGNRGGRGGISNAPRQAGGTQFTGGALGAAVGSRA</sequence>
<protein>
    <recommendedName>
        <fullName evidence="1">Eukaryotic translation initiation factor 3 subunit C</fullName>
        <shortName evidence="1">eIF3c</shortName>
    </recommendedName>
    <alternativeName>
        <fullName evidence="1">Eukaryotic translation initiation factor 3 93 kDa subunit homolog</fullName>
        <shortName evidence="1">eIF3 p93</shortName>
    </alternativeName>
    <alternativeName>
        <fullName evidence="1">Translation initiation factor eIF3, p93 subunit homolog</fullName>
    </alternativeName>
</protein>
<gene>
    <name type="primary">nip1</name>
    <name type="ORF">SS1G_00093</name>
</gene>
<reference key="1">
    <citation type="journal article" date="2011" name="PLoS Genet.">
        <title>Genomic analysis of the necrotrophic fungal pathogens Sclerotinia sclerotiorum and Botrytis cinerea.</title>
        <authorList>
            <person name="Amselem J."/>
            <person name="Cuomo C.A."/>
            <person name="van Kan J.A.L."/>
            <person name="Viaud M."/>
            <person name="Benito E.P."/>
            <person name="Couloux A."/>
            <person name="Coutinho P.M."/>
            <person name="de Vries R.P."/>
            <person name="Dyer P.S."/>
            <person name="Fillinger S."/>
            <person name="Fournier E."/>
            <person name="Gout L."/>
            <person name="Hahn M."/>
            <person name="Kohn L."/>
            <person name="Lapalu N."/>
            <person name="Plummer K.M."/>
            <person name="Pradier J.-M."/>
            <person name="Quevillon E."/>
            <person name="Sharon A."/>
            <person name="Simon A."/>
            <person name="ten Have A."/>
            <person name="Tudzynski B."/>
            <person name="Tudzynski P."/>
            <person name="Wincker P."/>
            <person name="Andrew M."/>
            <person name="Anthouard V."/>
            <person name="Beever R.E."/>
            <person name="Beffa R."/>
            <person name="Benoit I."/>
            <person name="Bouzid O."/>
            <person name="Brault B."/>
            <person name="Chen Z."/>
            <person name="Choquer M."/>
            <person name="Collemare J."/>
            <person name="Cotton P."/>
            <person name="Danchin E.G."/>
            <person name="Da Silva C."/>
            <person name="Gautier A."/>
            <person name="Giraud C."/>
            <person name="Giraud T."/>
            <person name="Gonzalez C."/>
            <person name="Grossetete S."/>
            <person name="Gueldener U."/>
            <person name="Henrissat B."/>
            <person name="Howlett B.J."/>
            <person name="Kodira C."/>
            <person name="Kretschmer M."/>
            <person name="Lappartient A."/>
            <person name="Leroch M."/>
            <person name="Levis C."/>
            <person name="Mauceli E."/>
            <person name="Neuveglise C."/>
            <person name="Oeser B."/>
            <person name="Pearson M."/>
            <person name="Poulain J."/>
            <person name="Poussereau N."/>
            <person name="Quesneville H."/>
            <person name="Rascle C."/>
            <person name="Schumacher J."/>
            <person name="Segurens B."/>
            <person name="Sexton A."/>
            <person name="Silva E."/>
            <person name="Sirven C."/>
            <person name="Soanes D.M."/>
            <person name="Talbot N.J."/>
            <person name="Templeton M."/>
            <person name="Yandava C."/>
            <person name="Yarden O."/>
            <person name="Zeng Q."/>
            <person name="Rollins J.A."/>
            <person name="Lebrun M.-H."/>
            <person name="Dickman M."/>
        </authorList>
    </citation>
    <scope>NUCLEOTIDE SEQUENCE [LARGE SCALE GENOMIC DNA]</scope>
    <source>
        <strain>ATCC 18683 / 1980 / Ss-1</strain>
    </source>
</reference>
<dbReference type="EMBL" id="CH476621">
    <property type="protein sequence ID" value="EDN90693.1"/>
    <property type="molecule type" value="Genomic_DNA"/>
</dbReference>
<dbReference type="RefSeq" id="XP_001598007.1">
    <property type="nucleotide sequence ID" value="XM_001597957.1"/>
</dbReference>
<dbReference type="SMR" id="A7E471"/>
<dbReference type="FunCoup" id="A7E471">
    <property type="interactions" value="1106"/>
</dbReference>
<dbReference type="STRING" id="665079.A7E471"/>
<dbReference type="EnsemblFungi" id="EDN90693">
    <property type="protein sequence ID" value="EDN90693"/>
    <property type="gene ID" value="SS1G_00093"/>
</dbReference>
<dbReference type="GeneID" id="5494678"/>
<dbReference type="KEGG" id="ssl:SS1G_00093"/>
<dbReference type="VEuPathDB" id="FungiDB:sscle_03g029750"/>
<dbReference type="eggNOG" id="KOG1076">
    <property type="taxonomic scope" value="Eukaryota"/>
</dbReference>
<dbReference type="HOGENOM" id="CLU_004304_0_2_1"/>
<dbReference type="InParanoid" id="A7E471"/>
<dbReference type="OMA" id="FRCGLIK"/>
<dbReference type="OrthoDB" id="29647at2759"/>
<dbReference type="Proteomes" id="UP000001312">
    <property type="component" value="Unassembled WGS sequence"/>
</dbReference>
<dbReference type="GO" id="GO:0010494">
    <property type="term" value="C:cytoplasmic stress granule"/>
    <property type="evidence" value="ECO:0007669"/>
    <property type="project" value="EnsemblFungi"/>
</dbReference>
<dbReference type="GO" id="GO:0016282">
    <property type="term" value="C:eukaryotic 43S preinitiation complex"/>
    <property type="evidence" value="ECO:0007669"/>
    <property type="project" value="UniProtKB-UniRule"/>
</dbReference>
<dbReference type="GO" id="GO:0033290">
    <property type="term" value="C:eukaryotic 48S preinitiation complex"/>
    <property type="evidence" value="ECO:0007669"/>
    <property type="project" value="UniProtKB-UniRule"/>
</dbReference>
<dbReference type="GO" id="GO:0005852">
    <property type="term" value="C:eukaryotic translation initiation factor 3 complex"/>
    <property type="evidence" value="ECO:0000318"/>
    <property type="project" value="GO_Central"/>
</dbReference>
<dbReference type="GO" id="GO:0071540">
    <property type="term" value="C:eukaryotic translation initiation factor 3 complex, eIF3e"/>
    <property type="evidence" value="ECO:0007669"/>
    <property type="project" value="EnsemblFungi"/>
</dbReference>
<dbReference type="GO" id="GO:0071541">
    <property type="term" value="C:eukaryotic translation initiation factor 3 complex, eIF3m"/>
    <property type="evidence" value="ECO:0007669"/>
    <property type="project" value="EnsemblFungi"/>
</dbReference>
<dbReference type="GO" id="GO:0043614">
    <property type="term" value="C:multi-eIF complex"/>
    <property type="evidence" value="ECO:0007669"/>
    <property type="project" value="EnsemblFungi"/>
</dbReference>
<dbReference type="GO" id="GO:0003723">
    <property type="term" value="F:RNA binding"/>
    <property type="evidence" value="ECO:0007669"/>
    <property type="project" value="InterPro"/>
</dbReference>
<dbReference type="GO" id="GO:0003743">
    <property type="term" value="F:translation initiation factor activity"/>
    <property type="evidence" value="ECO:0007669"/>
    <property type="project" value="UniProtKB-UniRule"/>
</dbReference>
<dbReference type="GO" id="GO:0031369">
    <property type="term" value="F:translation initiation factor binding"/>
    <property type="evidence" value="ECO:0000318"/>
    <property type="project" value="GO_Central"/>
</dbReference>
<dbReference type="GO" id="GO:0001732">
    <property type="term" value="P:formation of cytoplasmic translation initiation complex"/>
    <property type="evidence" value="ECO:0007669"/>
    <property type="project" value="UniProtKB-UniRule"/>
</dbReference>
<dbReference type="GO" id="GO:0006413">
    <property type="term" value="P:translational initiation"/>
    <property type="evidence" value="ECO:0000318"/>
    <property type="project" value="GO_Central"/>
</dbReference>
<dbReference type="FunFam" id="1.10.10.10:FF:000300">
    <property type="entry name" value="Eukaryotic translation initiation factor 3 subunit C"/>
    <property type="match status" value="1"/>
</dbReference>
<dbReference type="Gene3D" id="1.10.10.10">
    <property type="entry name" value="Winged helix-like DNA-binding domain superfamily/Winged helix DNA-binding domain"/>
    <property type="match status" value="1"/>
</dbReference>
<dbReference type="HAMAP" id="MF_03002">
    <property type="entry name" value="eIF3c"/>
    <property type="match status" value="1"/>
</dbReference>
<dbReference type="InterPro" id="IPR027516">
    <property type="entry name" value="EIF3C"/>
</dbReference>
<dbReference type="InterPro" id="IPR008905">
    <property type="entry name" value="EIF3C_N_dom"/>
</dbReference>
<dbReference type="InterPro" id="IPR000717">
    <property type="entry name" value="PCI_dom"/>
</dbReference>
<dbReference type="InterPro" id="IPR036388">
    <property type="entry name" value="WH-like_DNA-bd_sf"/>
</dbReference>
<dbReference type="InterPro" id="IPR036390">
    <property type="entry name" value="WH_DNA-bd_sf"/>
</dbReference>
<dbReference type="PANTHER" id="PTHR13937">
    <property type="entry name" value="EUKARYOTIC TRANSLATION INITATION FACTOR 3, SUBUNIT 8 EIF3S8 -RELATED"/>
    <property type="match status" value="1"/>
</dbReference>
<dbReference type="PANTHER" id="PTHR13937:SF0">
    <property type="entry name" value="EUKARYOTIC TRANSLATION INITIATION FACTOR 3 SUBUNIT C-RELATED"/>
    <property type="match status" value="1"/>
</dbReference>
<dbReference type="Pfam" id="PF05470">
    <property type="entry name" value="eIF-3c_N"/>
    <property type="match status" value="1"/>
</dbReference>
<dbReference type="Pfam" id="PF01399">
    <property type="entry name" value="PCI"/>
    <property type="match status" value="1"/>
</dbReference>
<dbReference type="SMART" id="SM00088">
    <property type="entry name" value="PINT"/>
    <property type="match status" value="1"/>
</dbReference>
<dbReference type="SUPFAM" id="SSF46785">
    <property type="entry name" value="Winged helix' DNA-binding domain"/>
    <property type="match status" value="1"/>
</dbReference>
<dbReference type="PROSITE" id="PS50250">
    <property type="entry name" value="PCI"/>
    <property type="match status" value="1"/>
</dbReference>
<name>EIF3C_SCLS1</name>
<proteinExistence type="inferred from homology"/>
<accession>A7E471</accession>
<organism>
    <name type="scientific">Sclerotinia sclerotiorum (strain ATCC 18683 / 1980 / Ss-1)</name>
    <name type="common">White mold</name>
    <name type="synonym">Whetzelinia sclerotiorum</name>
    <dbReference type="NCBI Taxonomy" id="665079"/>
    <lineage>
        <taxon>Eukaryota</taxon>
        <taxon>Fungi</taxon>
        <taxon>Dikarya</taxon>
        <taxon>Ascomycota</taxon>
        <taxon>Pezizomycotina</taxon>
        <taxon>Leotiomycetes</taxon>
        <taxon>Helotiales</taxon>
        <taxon>Sclerotiniaceae</taxon>
        <taxon>Sclerotinia</taxon>
    </lineage>
</organism>
<evidence type="ECO:0000255" key="1">
    <source>
        <dbReference type="HAMAP-Rule" id="MF_03002"/>
    </source>
</evidence>
<evidence type="ECO:0000255" key="2">
    <source>
        <dbReference type="PROSITE-ProRule" id="PRU01185"/>
    </source>
</evidence>
<evidence type="ECO:0000256" key="3">
    <source>
        <dbReference type="SAM" id="MobiDB-lite"/>
    </source>
</evidence>
<comment type="function">
    <text evidence="1">Component of the eukaryotic translation initiation factor 3 (eIF-3) complex, which is involved in protein synthesis of a specialized repertoire of mRNAs and, together with other initiation factors, stimulates binding of mRNA and methionyl-tRNAi to the 40S ribosome. The eIF-3 complex specifically targets and initiates translation of a subset of mRNAs involved in cell proliferation.</text>
</comment>
<comment type="subunit">
    <text evidence="1">Component of the eukaryotic translation initiation factor 3 (eIF-3) complex.</text>
</comment>
<comment type="subcellular location">
    <subcellularLocation>
        <location evidence="1">Cytoplasm</location>
    </subcellularLocation>
</comment>
<comment type="similarity">
    <text evidence="1">Belongs to the eIF-3 subunit C family.</text>
</comment>